<sequence length="262" mass="29379">MAPALLLIPAALASFILAFGTGVEFVRFTSLRPLLGGIPESGGPDARQGWLAALQDRSILAPLAWDLGLLLLFVGQHSLMAAERVKAWTSRYFGVLQRSLYVACTALALQLVMRYWEPIPKGPVLWEARAEPWATWVPLLCFVLHVISWLLIFSILLVFDYAELMGLKQVYYHVLGLGEPLALKSPRALRLFSHLRHPVCVELLTVLWVVPTLGTDRLLLAFLLTLYLGLAHGLDQQDLRYLRAQLQRKLHLLSRPQDGEAE</sequence>
<gene>
    <name type="primary">NRM</name>
    <name type="synonym">NRM29</name>
    <name type="ORF">UNQ555/PRO1112</name>
</gene>
<accession>Q8IXM6</accession>
<accession>B0S7R0</accession>
<accession>B0S7R1</accession>
<accession>I3XIE2</accession>
<accession>I3XIE3</accession>
<accession>Q5JP57</accession>
<accession>Q5JP58</accession>
<accession>Q5JP59</accession>
<accession>Q5JP60</accession>
<accession>Q8WU45</accession>
<accession>Q9BSX3</accession>
<accession>Q9UN92</accession>
<name>NRM_HUMAN</name>
<protein>
    <recommendedName>
        <fullName>Nurim</fullName>
    </recommendedName>
    <alternativeName>
        <fullName>Nuclear envelope membrane protein</fullName>
    </alternativeName>
    <alternativeName>
        <fullName>Nuclear rim protein</fullName>
    </alternativeName>
</protein>
<feature type="chain" id="PRO_0000299395" description="Nurim">
    <location>
        <begin position="1"/>
        <end position="262"/>
    </location>
</feature>
<feature type="topological domain" description="Nuclear" evidence="1">
    <location>
        <begin position="1"/>
        <end position="4"/>
    </location>
</feature>
<feature type="transmembrane region" description="Helical" evidence="1">
    <location>
        <begin position="5"/>
        <end position="28"/>
    </location>
</feature>
<feature type="topological domain" description="Perinuclear space" evidence="1">
    <location>
        <begin position="29"/>
        <end position="58"/>
    </location>
</feature>
<feature type="transmembrane region" description="Helical" evidence="1">
    <location>
        <begin position="59"/>
        <end position="80"/>
    </location>
</feature>
<feature type="topological domain" description="Nuclear" evidence="1">
    <location>
        <begin position="81"/>
        <end position="97"/>
    </location>
</feature>
<feature type="transmembrane region" description="Helical" evidence="1">
    <location>
        <begin position="98"/>
        <end position="114"/>
    </location>
</feature>
<feature type="topological domain" description="Perinuclear space" evidence="1">
    <location>
        <begin position="115"/>
        <end position="133"/>
    </location>
</feature>
<feature type="transmembrane region" description="Helical" evidence="1">
    <location>
        <begin position="134"/>
        <end position="164"/>
    </location>
</feature>
<feature type="topological domain" description="Nuclear" evidence="1">
    <location>
        <begin position="165"/>
        <end position="191"/>
    </location>
</feature>
<feature type="transmembrane region" description="Helical" evidence="1">
    <location>
        <begin position="192"/>
        <end position="210"/>
    </location>
</feature>
<feature type="topological domain" description="Perinuclear space" evidence="1">
    <location>
        <begin position="211"/>
        <end position="216"/>
    </location>
</feature>
<feature type="transmembrane region" description="Helical" evidence="1">
    <location>
        <begin position="217"/>
        <end position="234"/>
    </location>
</feature>
<feature type="topological domain" description="Nuclear" evidence="1">
    <location>
        <begin position="235"/>
        <end position="262"/>
    </location>
</feature>
<feature type="splice variant" id="VSP_054311" description="In isoform 3." evidence="5">
    <original>DARQGWLAALQDRSILAPLAWDLGLLLLFVGQHSLMAAERVKAWTSRYFGVLQRSLYVACTALAL</original>
    <variation>GILPCAGAGRASGPEVSPGSQTLLPPAPPSVCGAADSAVGGAYPGHGPSPPCFPPYPLPGPGSRA</variation>
    <location>
        <begin position="45"/>
        <end position="109"/>
    </location>
</feature>
<feature type="splice variant" id="VSP_054312" description="In isoform 3." evidence="5">
    <location>
        <begin position="110"/>
        <end position="262"/>
    </location>
</feature>
<feature type="splice variant" id="VSP_027627" description="In isoform 2." evidence="5">
    <location>
        <begin position="110"/>
        <end position="168"/>
    </location>
</feature>
<comment type="interaction">
    <interactant intactId="EBI-10262547">
        <id>Q8IXM6</id>
    </interactant>
    <interactant intactId="EBI-3925742">
        <id>Q8TD06</id>
        <label>AGR3</label>
    </interactant>
    <organismsDiffer>false</organismsDiffer>
    <experiments>3</experiments>
</comment>
<comment type="interaction">
    <interactant intactId="EBI-10262547">
        <id>Q8IXM6</id>
    </interactant>
    <interactant intactId="EBI-941819">
        <id>P16157-17</id>
        <label>ANK1</label>
    </interactant>
    <organismsDiffer>false</organismsDiffer>
    <experiments>3</experiments>
</comment>
<comment type="interaction">
    <interactant intactId="EBI-10262547">
        <id>Q8IXM6</id>
    </interactant>
    <interactant intactId="EBI-12701138">
        <id>P41181</id>
        <label>AQP2</label>
    </interactant>
    <organismsDiffer>false</organismsDiffer>
    <experiments>3</experiments>
</comment>
<comment type="interaction">
    <interactant intactId="EBI-10262547">
        <id>Q8IXM6</id>
    </interactant>
    <interactant intactId="EBI-13059134">
        <id>Q13520</id>
        <label>AQP6</label>
    </interactant>
    <organismsDiffer>false</organismsDiffer>
    <experiments>3</experiments>
</comment>
<comment type="interaction">
    <interactant intactId="EBI-10262547">
        <id>Q8IXM6</id>
    </interactant>
    <interactant intactId="EBI-11343438">
        <id>Q3SXY8</id>
        <label>ARL13B</label>
    </interactant>
    <organismsDiffer>false</organismsDiffer>
    <experiments>3</experiments>
</comment>
<comment type="interaction">
    <interactant intactId="EBI-10262547">
        <id>Q8IXM6</id>
    </interactant>
    <interactant intactId="EBI-3904417">
        <id>Q99437</id>
        <label>ATP6V0B</label>
    </interactant>
    <organismsDiffer>false</organismsDiffer>
    <experiments>3</experiments>
</comment>
<comment type="interaction">
    <interactant intactId="EBI-10262547">
        <id>Q8IXM6</id>
    </interactant>
    <interactant intactId="EBI-700794">
        <id>Q13323</id>
        <label>BIK</label>
    </interactant>
    <organismsDiffer>false</organismsDiffer>
    <experiments>3</experiments>
</comment>
<comment type="interaction">
    <interactant intactId="EBI-10262547">
        <id>Q8IXM6</id>
    </interactant>
    <interactant intactId="EBI-17274839">
        <id>P58418</id>
        <label>CLRN1</label>
    </interactant>
    <organismsDiffer>false</organismsDiffer>
    <experiments>3</experiments>
</comment>
<comment type="interaction">
    <interactant intactId="EBI-10262547">
        <id>Q8IXM6</id>
    </interactant>
    <interactant intactId="EBI-2835940">
        <id>P34972</id>
        <label>CNR2</label>
    </interactant>
    <organismsDiffer>false</organismsDiffer>
    <experiments>3</experiments>
</comment>
<comment type="interaction">
    <interactant intactId="EBI-10262547">
        <id>Q8IXM6</id>
    </interactant>
    <interactant intactId="EBI-18013275">
        <id>Q7Z7G2</id>
        <label>CPLX4</label>
    </interactant>
    <organismsDiffer>false</organismsDiffer>
    <experiments>3</experiments>
</comment>
<comment type="interaction">
    <interactant intactId="EBI-10262547">
        <id>Q8IXM6</id>
    </interactant>
    <interactant intactId="EBI-6942903">
        <id>Q96BA8</id>
        <label>CREB3L1</label>
    </interactant>
    <organismsDiffer>false</organismsDiffer>
    <experiments>3</experiments>
</comment>
<comment type="interaction">
    <interactant intactId="EBI-10262547">
        <id>Q8IXM6</id>
    </interactant>
    <interactant intactId="EBI-1046040">
        <id>P00387</id>
        <label>CYB5R3</label>
    </interactant>
    <organismsDiffer>false</organismsDiffer>
    <experiments>3</experiments>
</comment>
<comment type="interaction">
    <interactant intactId="EBI-10262547">
        <id>Q8IXM6</id>
    </interactant>
    <interactant intactId="EBI-2680384">
        <id>Q9BQA9</id>
        <label>CYBC1</label>
    </interactant>
    <organismsDiffer>false</organismsDiffer>
    <experiments>3</experiments>
</comment>
<comment type="interaction">
    <interactant intactId="EBI-10262547">
        <id>Q8IXM6</id>
    </interactant>
    <interactant intactId="EBI-3915253">
        <id>Q15125</id>
        <label>EBP</label>
    </interactant>
    <organismsDiffer>false</organismsDiffer>
    <experiments>3</experiments>
</comment>
<comment type="interaction">
    <interactant intactId="EBI-10262547">
        <id>Q8IXM6</id>
    </interactant>
    <interactant intactId="EBI-781551">
        <id>Q9Y282</id>
        <label>ERGIC3</label>
    </interactant>
    <organismsDiffer>false</organismsDiffer>
    <experiments>3</experiments>
</comment>
<comment type="interaction">
    <interactant intactId="EBI-10262547">
        <id>Q8IXM6</id>
    </interactant>
    <interactant intactId="EBI-946830">
        <id>P30040</id>
        <label>ERP29</label>
    </interactant>
    <organismsDiffer>false</organismsDiffer>
    <experiments>3</experiments>
</comment>
<comment type="interaction">
    <interactant intactId="EBI-10262547">
        <id>Q8IXM6</id>
    </interactant>
    <interactant intactId="EBI-18304435">
        <id>Q5JX71</id>
        <label>FAM209A</label>
    </interactant>
    <organismsDiffer>false</organismsDiffer>
    <experiments>3</experiments>
</comment>
<comment type="interaction">
    <interactant intactId="EBI-10262547">
        <id>Q8IXM6</id>
    </interactant>
    <interactant intactId="EBI-2833872">
        <id>O15552</id>
        <label>FFAR2</label>
    </interactant>
    <organismsDiffer>false</organismsDiffer>
    <experiments>3</experiments>
</comment>
<comment type="interaction">
    <interactant intactId="EBI-10262547">
        <id>Q8IXM6</id>
    </interactant>
    <interactant intactId="EBI-6911547">
        <id>A2A2Y4</id>
        <label>FRMD3</label>
    </interactant>
    <organismsDiffer>false</organismsDiffer>
    <experiments>3</experiments>
</comment>
<comment type="interaction">
    <interactant intactId="EBI-10262547">
        <id>Q8IXM6</id>
    </interactant>
    <interactant intactId="EBI-17231387">
        <id>Q6ZVE7</id>
        <label>GOLT1A</label>
    </interactant>
    <organismsDiffer>false</organismsDiffer>
    <experiments>3</experiments>
</comment>
<comment type="interaction">
    <interactant intactId="EBI-10262547">
        <id>Q8IXM6</id>
    </interactant>
    <interactant intactId="EBI-3917143">
        <id>Q5T7V8</id>
        <label>GORAB</label>
    </interactant>
    <organismsDiffer>false</organismsDiffer>
    <experiments>3</experiments>
</comment>
<comment type="interaction">
    <interactant intactId="EBI-10262547">
        <id>Q8IXM6</id>
    </interactant>
    <interactant intactId="EBI-11955647">
        <id>Q8TDV0</id>
        <label>GPR151</label>
    </interactant>
    <organismsDiffer>false</organismsDiffer>
    <experiments>3</experiments>
</comment>
<comment type="interaction">
    <interactant intactId="EBI-10262547">
        <id>Q8IXM6</id>
    </interactant>
    <interactant intactId="EBI-18076404">
        <id>O15529</id>
        <label>GPR42</label>
    </interactant>
    <organismsDiffer>false</organismsDiffer>
    <experiments>3</experiments>
</comment>
<comment type="interaction">
    <interactant intactId="EBI-10262547">
        <id>Q8IXM6</id>
    </interactant>
    <interactant intactId="EBI-11721746">
        <id>Q8TED1</id>
        <label>GPX8</label>
    </interactant>
    <organismsDiffer>false</organismsDiffer>
    <experiments>3</experiments>
</comment>
<comment type="interaction">
    <interactant intactId="EBI-10262547">
        <id>Q8IXM6</id>
    </interactant>
    <interactant intactId="EBI-301713">
        <id>Q96DB2</id>
        <label>HDAC11</label>
    </interactant>
    <organismsDiffer>false</organismsDiffer>
    <experiments>3</experiments>
</comment>
<comment type="interaction">
    <interactant intactId="EBI-10262547">
        <id>Q8IXM6</id>
    </interactant>
    <interactant intactId="EBI-2867874">
        <id>Q9UM44</id>
        <label>HHLA2</label>
    </interactant>
    <organismsDiffer>false</organismsDiffer>
    <experiments>3</experiments>
</comment>
<comment type="interaction">
    <interactant intactId="EBI-10262547">
        <id>Q8IXM6</id>
    </interactant>
    <interactant intactId="EBI-18053395">
        <id>Q7Z5P4</id>
        <label>HSD17B13</label>
    </interactant>
    <organismsDiffer>false</organismsDiffer>
    <experiments>3</experiments>
</comment>
<comment type="interaction">
    <interactant intactId="EBI-10262547">
        <id>Q8IXM6</id>
    </interactant>
    <interactant intactId="EBI-8632435">
        <id>P43628</id>
        <label>KIR2DL3</label>
    </interactant>
    <organismsDiffer>false</organismsDiffer>
    <experiments>3</experiments>
</comment>
<comment type="interaction">
    <interactant intactId="EBI-10262547">
        <id>Q8IXM6</id>
    </interactant>
    <interactant intactId="EBI-750776">
        <id>O95214</id>
        <label>LEPROTL1</label>
    </interactant>
    <organismsDiffer>false</organismsDiffer>
    <experiments>3</experiments>
</comment>
<comment type="interaction">
    <interactant intactId="EBI-10262547">
        <id>Q8IXM6</id>
    </interactant>
    <interactant intactId="EBI-11956541">
        <id>Q9GZY8-5</id>
        <label>MFF</label>
    </interactant>
    <organismsDiffer>false</organismsDiffer>
    <experiments>3</experiments>
</comment>
<comment type="interaction">
    <interactant intactId="EBI-10262547">
        <id>Q8IXM6</id>
    </interactant>
    <interactant intactId="EBI-724754">
        <id>O14880</id>
        <label>MGST3</label>
    </interactant>
    <organismsDiffer>false</organismsDiffer>
    <experiments>3</experiments>
</comment>
<comment type="interaction">
    <interactant intactId="EBI-10262547">
        <id>Q8IXM6</id>
    </interactant>
    <interactant intactId="EBI-5454865">
        <id>Q6IN84</id>
        <label>MRM1</label>
    </interactant>
    <organismsDiffer>false</organismsDiffer>
    <experiments>3</experiments>
</comment>
<comment type="interaction">
    <interactant intactId="EBI-10262547">
        <id>Q8IXM6</id>
    </interactant>
    <interactant intactId="EBI-13294781">
        <id>P04000</id>
        <label>OPN1LW</label>
    </interactant>
    <organismsDiffer>false</organismsDiffer>
    <experiments>3</experiments>
</comment>
<comment type="interaction">
    <interactant intactId="EBI-10262547">
        <id>Q8IXM6</id>
    </interactant>
    <interactant intactId="EBI-17287327">
        <id>Q460N3-2</id>
        <label>PARP15</label>
    </interactant>
    <organismsDiffer>false</organismsDiffer>
    <experiments>3</experiments>
</comment>
<comment type="interaction">
    <interactant intactId="EBI-10262547">
        <id>Q8IXM6</id>
    </interactant>
    <interactant intactId="EBI-12956949">
        <id>Q9Y5G9</id>
        <label>PCDHGA4</label>
    </interactant>
    <organismsDiffer>false</organismsDiffer>
    <experiments>3</experiments>
</comment>
<comment type="interaction">
    <interactant intactId="EBI-10262547">
        <id>Q8IXM6</id>
    </interactant>
    <interactant intactId="EBI-594836">
        <id>O00623</id>
        <label>PEX12</label>
    </interactant>
    <organismsDiffer>false</organismsDiffer>
    <experiments>3</experiments>
</comment>
<comment type="interaction">
    <interactant intactId="EBI-10262547">
        <id>Q8IXM6</id>
    </interactant>
    <interactant intactId="EBI-10192441">
        <id>Q86VR2</id>
        <label>RETREG3</label>
    </interactant>
    <organismsDiffer>false</organismsDiffer>
    <experiments>3</experiments>
</comment>
<comment type="interaction">
    <interactant intactId="EBI-10262547">
        <id>Q8IXM6</id>
    </interactant>
    <interactant intactId="EBI-17589229">
        <id>Q6NTF9-3</id>
        <label>RHBDD2</label>
    </interactant>
    <organismsDiffer>false</organismsDiffer>
    <experiments>3</experiments>
</comment>
<comment type="interaction">
    <interactant intactId="EBI-10262547">
        <id>Q8IXM6</id>
    </interactant>
    <interactant intactId="EBI-1056589">
        <id>Q96TC7</id>
        <label>RMDN3</label>
    </interactant>
    <organismsDiffer>false</organismsDiffer>
    <experiments>3</experiments>
</comment>
<comment type="interaction">
    <interactant intactId="EBI-10262547">
        <id>Q8IXM6</id>
    </interactant>
    <interactant intactId="EBI-2372399">
        <id>O60930</id>
        <label>RNASEH1</label>
    </interactant>
    <organismsDiffer>false</organismsDiffer>
    <experiments>3</experiments>
</comment>
<comment type="interaction">
    <interactant intactId="EBI-10262547">
        <id>Q8IXM6</id>
    </interactant>
    <interactant intactId="EBI-12275482">
        <id>Q96DX8</id>
        <label>RTP4</label>
    </interactant>
    <organismsDiffer>false</organismsDiffer>
    <experiments>3</experiments>
</comment>
<comment type="interaction">
    <interactant intactId="EBI-10262547">
        <id>Q8IXM6</id>
    </interactant>
    <interactant intactId="EBI-3920694">
        <id>Q9NR31</id>
        <label>SAR1A</label>
    </interactant>
    <organismsDiffer>false</organismsDiffer>
    <experiments>3</experiments>
</comment>
<comment type="interaction">
    <interactant intactId="EBI-10262547">
        <id>Q8IXM6</id>
    </interactant>
    <interactant intactId="EBI-18114847">
        <id>Q12908</id>
        <label>SLC10A2</label>
    </interactant>
    <organismsDiffer>false</organismsDiffer>
    <experiments>3</experiments>
</comment>
<comment type="interaction">
    <interactant intactId="EBI-10262547">
        <id>Q8IXM6</id>
    </interactant>
    <interactant intactId="EBI-18159983">
        <id>Q3KNW5</id>
        <label>SLC10A6</label>
    </interactant>
    <organismsDiffer>false</organismsDiffer>
    <experiments>3</experiments>
</comment>
<comment type="interaction">
    <interactant intactId="EBI-10262547">
        <id>Q8IXM6</id>
    </interactant>
    <interactant intactId="EBI-17595455">
        <id>P54219-3</id>
        <label>SLC18A1</label>
    </interactant>
    <organismsDiffer>false</organismsDiffer>
    <experiments>3</experiments>
</comment>
<comment type="interaction">
    <interactant intactId="EBI-10262547">
        <id>Q8IXM6</id>
    </interactant>
    <interactant intactId="EBI-8644112">
        <id>Q9BRI3</id>
        <label>SLC30A2</label>
    </interactant>
    <organismsDiffer>false</organismsDiffer>
    <experiments>3</experiments>
</comment>
<comment type="interaction">
    <interactant intactId="EBI-10262547">
        <id>Q8IXM6</id>
    </interactant>
    <interactant intactId="EBI-17295964">
        <id>Q9NQQ7-3</id>
        <label>SLC35C2</label>
    </interactant>
    <organismsDiffer>false</organismsDiffer>
    <experiments>3</experiments>
</comment>
<comment type="interaction">
    <interactant intactId="EBI-10262547">
        <id>Q8IXM6</id>
    </interactant>
    <interactant intactId="EBI-12898013">
        <id>Q9NP94</id>
        <label>SLC39A2</label>
    </interactant>
    <organismsDiffer>false</organismsDiffer>
    <experiments>3</experiments>
</comment>
<comment type="interaction">
    <interactant intactId="EBI-10262547">
        <id>Q8IXM6</id>
    </interactant>
    <interactant intactId="EBI-11343466">
        <id>Q9H2J7</id>
        <label>SLC6A15</label>
    </interactant>
    <organismsDiffer>false</organismsDiffer>
    <experiments>3</experiments>
</comment>
<comment type="interaction">
    <interactant intactId="EBI-10262547">
        <id>Q8IXM6</id>
    </interactant>
    <interactant intactId="EBI-10819434">
        <id>Q9NPE6</id>
        <label>SPAG4</label>
    </interactant>
    <organismsDiffer>false</organismsDiffer>
    <experiments>3</experiments>
</comment>
<comment type="interaction">
    <interactant intactId="EBI-10262547">
        <id>Q8IXM6</id>
    </interactant>
    <interactant intactId="EBI-17280858">
        <id>Q8WWF3</id>
        <label>SSMEM1</label>
    </interactant>
    <organismsDiffer>false</organismsDiffer>
    <experiments>3</experiments>
</comment>
<comment type="interaction">
    <interactant intactId="EBI-10262547">
        <id>Q8IXM6</id>
    </interactant>
    <interactant intactId="EBI-712466">
        <id>Q16623</id>
        <label>STX1A</label>
    </interactant>
    <organismsDiffer>false</organismsDiffer>
    <experiments>3</experiments>
</comment>
<comment type="interaction">
    <interactant intactId="EBI-10262547">
        <id>Q8IXM6</id>
    </interactant>
    <interactant intactId="EBI-1044964">
        <id>Q9UH99</id>
        <label>SUN2</label>
    </interactant>
    <organismsDiffer>false</organismsDiffer>
    <experiments>3</experiments>
</comment>
<comment type="interaction">
    <interactant intactId="EBI-10262547">
        <id>Q8IXM6</id>
    </interactant>
    <interactant intactId="EBI-18178701">
        <id>Q4KMG9</id>
        <label>TMEM52B</label>
    </interactant>
    <organismsDiffer>false</organismsDiffer>
    <experiments>3</experiments>
</comment>
<comment type="interaction">
    <interactant intactId="EBI-10262547">
        <id>Q8IXM6</id>
    </interactant>
    <interactant intactId="EBI-6447886">
        <id>Q9Y320</id>
        <label>TMX2</label>
    </interactant>
    <organismsDiffer>false</organismsDiffer>
    <experiments>3</experiments>
</comment>
<comment type="interaction">
    <interactant intactId="EBI-10262547">
        <id>Q8IXM6</id>
    </interactant>
    <interactant intactId="EBI-10262539">
        <id>Q8IWR1</id>
        <label>TRIM59</label>
    </interactant>
    <organismsDiffer>false</organismsDiffer>
    <experiments>7</experiments>
</comment>
<comment type="subcellular location">
    <subcellularLocation>
        <location evidence="2 3 4">Nucleus inner membrane</location>
        <topology evidence="2 3 4">Multi-pass membrane protein</topology>
    </subcellularLocation>
</comment>
<comment type="alternative products">
    <event type="alternative splicing"/>
    <isoform>
        <id>Q8IXM6-1</id>
        <name>1</name>
        <name>a</name>
        <sequence type="displayed"/>
    </isoform>
    <isoform>
        <id>Q8IXM6-2</id>
        <name>2</name>
        <name>b</name>
        <sequence type="described" ref="VSP_027627"/>
    </isoform>
    <isoform>
        <id>Q8IXM6-6</id>
        <name>3</name>
        <name>c</name>
        <sequence type="described" ref="VSP_054311 VSP_054312"/>
    </isoform>
</comment>
<comment type="similarity">
    <text evidence="6">Belongs to the nurim family.</text>
</comment>
<evidence type="ECO:0000255" key="1"/>
<evidence type="ECO:0000269" key="2">
    <source>
    </source>
</evidence>
<evidence type="ECO:0000269" key="3">
    <source>
    </source>
</evidence>
<evidence type="ECO:0000269" key="4">
    <source>
    </source>
</evidence>
<evidence type="ECO:0000303" key="5">
    <source>
    </source>
</evidence>
<evidence type="ECO:0000305" key="6"/>
<dbReference type="EMBL" id="JQ798186">
    <property type="protein sequence ID" value="AFL55648.1"/>
    <property type="molecule type" value="mRNA"/>
</dbReference>
<dbReference type="EMBL" id="JQ798187">
    <property type="protein sequence ID" value="AFL55649.1"/>
    <property type="molecule type" value="mRNA"/>
</dbReference>
<dbReference type="EMBL" id="AY358411">
    <property type="protein sequence ID" value="AAQ88777.1"/>
    <property type="molecule type" value="mRNA"/>
</dbReference>
<dbReference type="EMBL" id="AK315190">
    <property type="protein sequence ID" value="BAG37630.1"/>
    <property type="molecule type" value="mRNA"/>
</dbReference>
<dbReference type="EMBL" id="AB110935">
    <property type="protein sequence ID" value="BAD13701.1"/>
    <property type="molecule type" value="Genomic_DNA"/>
</dbReference>
<dbReference type="EMBL" id="AB110936">
    <property type="protein sequence ID" value="BAD13702.1"/>
    <property type="molecule type" value="Genomic_DNA"/>
</dbReference>
<dbReference type="EMBL" id="AB202096">
    <property type="protein sequence ID" value="BAE78616.1"/>
    <property type="molecule type" value="Genomic_DNA"/>
</dbReference>
<dbReference type="EMBL" id="AL662797">
    <property type="status" value="NOT_ANNOTATED_CDS"/>
    <property type="molecule type" value="Genomic_DNA"/>
</dbReference>
<dbReference type="EMBL" id="AL732442">
    <property type="status" value="NOT_ANNOTATED_CDS"/>
    <property type="molecule type" value="Genomic_DNA"/>
</dbReference>
<dbReference type="EMBL" id="AL845353">
    <property type="status" value="NOT_ANNOTATED_CDS"/>
    <property type="molecule type" value="Genomic_DNA"/>
</dbReference>
<dbReference type="EMBL" id="BX908728">
    <property type="status" value="NOT_ANNOTATED_CDS"/>
    <property type="molecule type" value="Genomic_DNA"/>
</dbReference>
<dbReference type="EMBL" id="CR759873">
    <property type="status" value="NOT_ANNOTATED_CDS"/>
    <property type="molecule type" value="Genomic_DNA"/>
</dbReference>
<dbReference type="EMBL" id="CR788240">
    <property type="status" value="NOT_ANNOTATED_CDS"/>
    <property type="molecule type" value="Genomic_DNA"/>
</dbReference>
<dbReference type="EMBL" id="CR936878">
    <property type="status" value="NOT_ANNOTATED_CDS"/>
    <property type="molecule type" value="Genomic_DNA"/>
</dbReference>
<dbReference type="EMBL" id="CH471081">
    <property type="protein sequence ID" value="EAX03320.1"/>
    <property type="molecule type" value="Genomic_DNA"/>
</dbReference>
<dbReference type="EMBL" id="BC004509">
    <property type="protein sequence ID" value="AAH04509.2"/>
    <property type="molecule type" value="mRNA"/>
</dbReference>
<dbReference type="EMBL" id="BC021260">
    <property type="protein sequence ID" value="AAH21260.1"/>
    <property type="molecule type" value="mRNA"/>
</dbReference>
<dbReference type="EMBL" id="BC039865">
    <property type="protein sequence ID" value="AAH39865.1"/>
    <property type="molecule type" value="mRNA"/>
</dbReference>
<dbReference type="EMBL" id="AF143676">
    <property type="protein sequence ID" value="AAD45885.1"/>
    <property type="molecule type" value="mRNA"/>
</dbReference>
<dbReference type="CCDS" id="CCDS4686.1">
    <molecule id="Q8IXM6-1"/>
</dbReference>
<dbReference type="CCDS" id="CCDS59498.1">
    <molecule id="Q8IXM6-2"/>
</dbReference>
<dbReference type="RefSeq" id="NP_001257636.1">
    <property type="nucleotide sequence ID" value="NM_001270707.1"/>
</dbReference>
<dbReference type="RefSeq" id="NP_001257637.1">
    <property type="nucleotide sequence ID" value="NM_001270708.1"/>
</dbReference>
<dbReference type="RefSeq" id="NP_001257638.1">
    <molecule id="Q8IXM6-2"/>
    <property type="nucleotide sequence ID" value="NM_001270709.2"/>
</dbReference>
<dbReference type="RefSeq" id="NP_001257639.1">
    <molecule id="Q8IXM6-6"/>
    <property type="nucleotide sequence ID" value="NM_001270710.2"/>
</dbReference>
<dbReference type="RefSeq" id="NP_001371298.1">
    <molecule id="Q8IXM6-1"/>
    <property type="nucleotide sequence ID" value="NM_001384369.1"/>
</dbReference>
<dbReference type="RefSeq" id="NP_009174.1">
    <molecule id="Q8IXM6-1"/>
    <property type="nucleotide sequence ID" value="NM_007243.3"/>
</dbReference>
<dbReference type="BioGRID" id="116427">
    <property type="interactions" value="74"/>
</dbReference>
<dbReference type="FunCoup" id="Q8IXM6">
    <property type="interactions" value="423"/>
</dbReference>
<dbReference type="IntAct" id="Q8IXM6">
    <property type="interactions" value="69"/>
</dbReference>
<dbReference type="STRING" id="9606.ENSP00000259953"/>
<dbReference type="iPTMnet" id="Q8IXM6"/>
<dbReference type="PhosphoSitePlus" id="Q8IXM6"/>
<dbReference type="SwissPalm" id="Q8IXM6"/>
<dbReference type="BioMuta" id="NRM"/>
<dbReference type="DMDM" id="74750736"/>
<dbReference type="jPOST" id="Q8IXM6"/>
<dbReference type="MassIVE" id="Q8IXM6"/>
<dbReference type="PaxDb" id="9606-ENSP00000259953"/>
<dbReference type="PeptideAtlas" id="Q8IXM6"/>
<dbReference type="ProteomicsDB" id="71030">
    <molecule id="Q8IXM6-1"/>
</dbReference>
<dbReference type="ProteomicsDB" id="71031">
    <molecule id="Q8IXM6-2"/>
</dbReference>
<dbReference type="Pumba" id="Q8IXM6"/>
<dbReference type="Antibodypedia" id="26491">
    <property type="antibodies" value="53 antibodies from 16 providers"/>
</dbReference>
<dbReference type="DNASU" id="11270"/>
<dbReference type="Ensembl" id="ENST00000259953.8">
    <molecule id="Q8IXM6-1"/>
    <property type="protein sequence ID" value="ENSP00000259953.4"/>
    <property type="gene ID" value="ENSG00000137404.15"/>
</dbReference>
<dbReference type="Ensembl" id="ENST00000376420.9">
    <molecule id="Q8IXM6-2"/>
    <property type="protein sequence ID" value="ENSP00000365602.5"/>
    <property type="gene ID" value="ENSG00000137404.15"/>
</dbReference>
<dbReference type="Ensembl" id="ENST00000376421.7">
    <molecule id="Q8IXM6-1"/>
    <property type="protein sequence ID" value="ENSP00000365603.5"/>
    <property type="gene ID" value="ENSG00000137404.15"/>
</dbReference>
<dbReference type="Ensembl" id="ENST00000383570.8">
    <molecule id="Q8IXM6-2"/>
    <property type="protein sequence ID" value="ENSP00000373064.4"/>
    <property type="gene ID" value="ENSG00000206484.10"/>
</dbReference>
<dbReference type="Ensembl" id="ENST00000383571.6">
    <molecule id="Q8IXM6-1"/>
    <property type="protein sequence ID" value="ENSP00000373065.2"/>
    <property type="gene ID" value="ENSG00000206484.10"/>
</dbReference>
<dbReference type="Ensembl" id="ENST00000422181.5">
    <molecule id="Q8IXM6-1"/>
    <property type="protein sequence ID" value="ENSP00000409285.1"/>
    <property type="gene ID" value="ENSG00000234809.8"/>
</dbReference>
<dbReference type="Ensembl" id="ENST00000422664.6">
    <molecule id="Q8IXM6-2"/>
    <property type="protein sequence ID" value="ENSP00000394788.2"/>
    <property type="gene ID" value="ENSG00000228854.8"/>
</dbReference>
<dbReference type="Ensembl" id="ENST00000422747.5">
    <molecule id="Q8IXM6-1"/>
    <property type="protein sequence ID" value="ENSP00000414927.1"/>
    <property type="gene ID" value="ENSG00000236843.8"/>
</dbReference>
<dbReference type="Ensembl" id="ENST00000427944.5">
    <molecule id="Q8IXM6-1"/>
    <property type="protein sequence ID" value="ENSP00000405789.1"/>
    <property type="gene ID" value="ENSG00000228854.8"/>
</dbReference>
<dbReference type="Ensembl" id="ENST00000431322.5">
    <molecule id="Q8IXM6-1"/>
    <property type="protein sequence ID" value="ENSP00000398752.1"/>
    <property type="gene ID" value="ENSG00000228867.8"/>
</dbReference>
<dbReference type="Ensembl" id="ENST00000438502.5">
    <molecule id="Q8IXM6-1"/>
    <property type="protein sequence ID" value="ENSP00000397755.1"/>
    <property type="gene ID" value="ENSG00000235773.8"/>
</dbReference>
<dbReference type="Ensembl" id="ENST00000445058.6">
    <molecule id="Q8IXM6-2"/>
    <property type="protein sequence ID" value="ENSP00000389958.2"/>
    <property type="gene ID" value="ENSG00000236843.8"/>
</dbReference>
<dbReference type="Ensembl" id="ENST00000449041.6">
    <molecule id="Q8IXM6-2"/>
    <property type="protein sequence ID" value="ENSP00000399560.2"/>
    <property type="gene ID" value="ENSG00000228867.8"/>
</dbReference>
<dbReference type="Ensembl" id="ENST00000450138.6">
    <molecule id="Q8IXM6-2"/>
    <property type="protein sequence ID" value="ENSP00000407111.2"/>
    <property type="gene ID" value="ENSG00000234809.8"/>
</dbReference>
<dbReference type="Ensembl" id="ENST00000456720.6">
    <molecule id="Q8IXM6-2"/>
    <property type="protein sequence ID" value="ENSP00000392502.2"/>
    <property type="gene ID" value="ENSG00000235773.8"/>
</dbReference>
<dbReference type="Ensembl" id="ENST00000610775.1">
    <molecule id="Q8IXM6-1"/>
    <property type="protein sequence ID" value="ENSP00000481407.1"/>
    <property type="gene ID" value="ENSG00000228867.8"/>
</dbReference>
<dbReference type="Ensembl" id="ENST00000612190.1">
    <molecule id="Q8IXM6-1"/>
    <property type="protein sequence ID" value="ENSP00000482593.1"/>
    <property type="gene ID" value="ENSG00000234809.8"/>
</dbReference>
<dbReference type="Ensembl" id="ENST00000613827.1">
    <molecule id="Q8IXM6-1"/>
    <property type="protein sequence ID" value="ENSP00000481406.1"/>
    <property type="gene ID" value="ENSG00000228854.8"/>
</dbReference>
<dbReference type="Ensembl" id="ENST00000617159.1">
    <molecule id="Q8IXM6-1"/>
    <property type="protein sequence ID" value="ENSP00000478812.1"/>
    <property type="gene ID" value="ENSG00000236843.8"/>
</dbReference>
<dbReference type="Ensembl" id="ENST00000617220.1">
    <molecule id="Q8IXM6-1"/>
    <property type="protein sequence ID" value="ENSP00000483875.1"/>
    <property type="gene ID" value="ENSG00000206484.10"/>
</dbReference>
<dbReference type="Ensembl" id="ENST00000620249.1">
    <molecule id="Q8IXM6-1"/>
    <property type="protein sequence ID" value="ENSP00000482740.1"/>
    <property type="gene ID" value="ENSG00000235773.8"/>
</dbReference>
<dbReference type="GeneID" id="11270"/>
<dbReference type="KEGG" id="hsa:11270"/>
<dbReference type="MANE-Select" id="ENST00000376421.7">
    <property type="protein sequence ID" value="ENSP00000365603.5"/>
    <property type="RefSeq nucleotide sequence ID" value="NM_001384369.1"/>
    <property type="RefSeq protein sequence ID" value="NP_001371298.1"/>
</dbReference>
<dbReference type="UCSC" id="uc003nrc.4">
    <molecule id="Q8IXM6-1"/>
    <property type="organism name" value="human"/>
</dbReference>
<dbReference type="AGR" id="HGNC:8003"/>
<dbReference type="CTD" id="11270"/>
<dbReference type="DisGeNET" id="11270"/>
<dbReference type="GeneCards" id="NRM"/>
<dbReference type="HGNC" id="HGNC:8003">
    <property type="gene designation" value="NRM"/>
</dbReference>
<dbReference type="HPA" id="ENSG00000137404">
    <property type="expression patterns" value="Low tissue specificity"/>
</dbReference>
<dbReference type="MIM" id="620017">
    <property type="type" value="gene"/>
</dbReference>
<dbReference type="neXtProt" id="NX_Q8IXM6"/>
<dbReference type="OpenTargets" id="ENSG00000137404"/>
<dbReference type="PharmGKB" id="PA31782"/>
<dbReference type="VEuPathDB" id="HostDB:ENSG00000137404"/>
<dbReference type="eggNOG" id="ENOG502RS62">
    <property type="taxonomic scope" value="Eukaryota"/>
</dbReference>
<dbReference type="GeneTree" id="ENSGT00390000008146"/>
<dbReference type="HOGENOM" id="CLU_083708_1_1_1"/>
<dbReference type="InParanoid" id="Q8IXM6"/>
<dbReference type="OMA" id="WSIWFPL"/>
<dbReference type="OrthoDB" id="10050858at2759"/>
<dbReference type="PAN-GO" id="Q8IXM6">
    <property type="GO annotations" value="1 GO annotation based on evolutionary models"/>
</dbReference>
<dbReference type="PhylomeDB" id="Q8IXM6"/>
<dbReference type="TreeFam" id="TF324853"/>
<dbReference type="PathwayCommons" id="Q8IXM6"/>
<dbReference type="SignaLink" id="Q8IXM6"/>
<dbReference type="BioGRID-ORCS" id="11270">
    <property type="hits" value="14 hits in 1154 CRISPR screens"/>
</dbReference>
<dbReference type="ChiTaRS" id="NRM">
    <property type="organism name" value="human"/>
</dbReference>
<dbReference type="GenomeRNAi" id="11270"/>
<dbReference type="Pharos" id="Q8IXM6">
    <property type="development level" value="Tbio"/>
</dbReference>
<dbReference type="PRO" id="PR:Q8IXM6"/>
<dbReference type="Proteomes" id="UP000005640">
    <property type="component" value="Chromosome 6"/>
</dbReference>
<dbReference type="RNAct" id="Q8IXM6">
    <property type="molecule type" value="protein"/>
</dbReference>
<dbReference type="Bgee" id="ENSG00000137404">
    <property type="expression patterns" value="Expressed in ganglionic eminence and 98 other cell types or tissues"/>
</dbReference>
<dbReference type="ExpressionAtlas" id="Q8IXM6">
    <property type="expression patterns" value="baseline and differential"/>
</dbReference>
<dbReference type="GO" id="GO:0016020">
    <property type="term" value="C:membrane"/>
    <property type="evidence" value="ECO:0007005"/>
    <property type="project" value="UniProtKB"/>
</dbReference>
<dbReference type="GO" id="GO:0005635">
    <property type="term" value="C:nuclear envelope"/>
    <property type="evidence" value="ECO:0000314"/>
    <property type="project" value="UniProtKB"/>
</dbReference>
<dbReference type="GO" id="GO:0005637">
    <property type="term" value="C:nuclear inner membrane"/>
    <property type="evidence" value="ECO:0007669"/>
    <property type="project" value="UniProtKB-SubCell"/>
</dbReference>
<dbReference type="GO" id="GO:0031965">
    <property type="term" value="C:nuclear membrane"/>
    <property type="evidence" value="ECO:0000314"/>
    <property type="project" value="HPA"/>
</dbReference>
<dbReference type="InterPro" id="IPR033580">
    <property type="entry name" value="Nurim-like"/>
</dbReference>
<dbReference type="PANTHER" id="PTHR31040">
    <property type="entry name" value="NURIM"/>
    <property type="match status" value="1"/>
</dbReference>
<dbReference type="PANTHER" id="PTHR31040:SF1">
    <property type="entry name" value="NURIM"/>
    <property type="match status" value="1"/>
</dbReference>
<proteinExistence type="evidence at protein level"/>
<keyword id="KW-0025">Alternative splicing</keyword>
<keyword id="KW-0472">Membrane</keyword>
<keyword id="KW-0539">Nucleus</keyword>
<keyword id="KW-1267">Proteomics identification</keyword>
<keyword id="KW-1185">Reference proteome</keyword>
<keyword id="KW-0812">Transmembrane</keyword>
<keyword id="KW-1133">Transmembrane helix</keyword>
<organism>
    <name type="scientific">Homo sapiens</name>
    <name type="common">Human</name>
    <dbReference type="NCBI Taxonomy" id="9606"/>
    <lineage>
        <taxon>Eukaryota</taxon>
        <taxon>Metazoa</taxon>
        <taxon>Chordata</taxon>
        <taxon>Craniata</taxon>
        <taxon>Vertebrata</taxon>
        <taxon>Euteleostomi</taxon>
        <taxon>Mammalia</taxon>
        <taxon>Eutheria</taxon>
        <taxon>Euarchontoglires</taxon>
        <taxon>Primates</taxon>
        <taxon>Haplorrhini</taxon>
        <taxon>Catarrhini</taxon>
        <taxon>Hominidae</taxon>
        <taxon>Homo</taxon>
    </lineage>
</organism>
<reference key="1">
    <citation type="journal article" date="2012" name="Curr. Mol. Med.">
        <title>The integral nuclear membrane protein nurim plays a role in the suppression of apoptosis.</title>
        <authorList>
            <person name="Chen H."/>
            <person name="Chen K."/>
            <person name="Chen J."/>
            <person name="Cheng H."/>
            <person name="Zhou R."/>
        </authorList>
    </citation>
    <scope>NUCLEOTIDE SEQUENCE [MRNA] (ISOFORMS 2 AND 3)</scope>
    <scope>SUBCELLULAR LOCATION</scope>
</reference>
<reference key="2">
    <citation type="journal article" date="2003" name="Genome Res.">
        <title>The secreted protein discovery initiative (SPDI), a large-scale effort to identify novel human secreted and transmembrane proteins: a bioinformatics assessment.</title>
        <authorList>
            <person name="Clark H.F."/>
            <person name="Gurney A.L."/>
            <person name="Abaya E."/>
            <person name="Baker K."/>
            <person name="Baldwin D.T."/>
            <person name="Brush J."/>
            <person name="Chen J."/>
            <person name="Chow B."/>
            <person name="Chui C."/>
            <person name="Crowley C."/>
            <person name="Currell B."/>
            <person name="Deuel B."/>
            <person name="Dowd P."/>
            <person name="Eaton D."/>
            <person name="Foster J.S."/>
            <person name="Grimaldi C."/>
            <person name="Gu Q."/>
            <person name="Hass P.E."/>
            <person name="Heldens S."/>
            <person name="Huang A."/>
            <person name="Kim H.S."/>
            <person name="Klimowski L."/>
            <person name="Jin Y."/>
            <person name="Johnson S."/>
            <person name="Lee J."/>
            <person name="Lewis L."/>
            <person name="Liao D."/>
            <person name="Mark M.R."/>
            <person name="Robbie E."/>
            <person name="Sanchez C."/>
            <person name="Schoenfeld J."/>
            <person name="Seshagiri S."/>
            <person name="Simmons L."/>
            <person name="Singh J."/>
            <person name="Smith V."/>
            <person name="Stinson J."/>
            <person name="Vagts A."/>
            <person name="Vandlen R.L."/>
            <person name="Watanabe C."/>
            <person name="Wieand D."/>
            <person name="Woods K."/>
            <person name="Xie M.-H."/>
            <person name="Yansura D.G."/>
            <person name="Yi S."/>
            <person name="Yu G."/>
            <person name="Yuan J."/>
            <person name="Zhang M."/>
            <person name="Zhang Z."/>
            <person name="Goddard A.D."/>
            <person name="Wood W.I."/>
            <person name="Godowski P.J."/>
            <person name="Gray A.M."/>
        </authorList>
    </citation>
    <scope>NUCLEOTIDE SEQUENCE [LARGE SCALE MRNA] (ISOFORM 1)</scope>
</reference>
<reference key="3">
    <citation type="journal article" date="2004" name="Nat. Genet.">
        <title>Complete sequencing and characterization of 21,243 full-length human cDNAs.</title>
        <authorList>
            <person name="Ota T."/>
            <person name="Suzuki Y."/>
            <person name="Nishikawa T."/>
            <person name="Otsuki T."/>
            <person name="Sugiyama T."/>
            <person name="Irie R."/>
            <person name="Wakamatsu A."/>
            <person name="Hayashi K."/>
            <person name="Sato H."/>
            <person name="Nagai K."/>
            <person name="Kimura K."/>
            <person name="Makita H."/>
            <person name="Sekine M."/>
            <person name="Obayashi M."/>
            <person name="Nishi T."/>
            <person name="Shibahara T."/>
            <person name="Tanaka T."/>
            <person name="Ishii S."/>
            <person name="Yamamoto J."/>
            <person name="Saito K."/>
            <person name="Kawai Y."/>
            <person name="Isono Y."/>
            <person name="Nakamura Y."/>
            <person name="Nagahari K."/>
            <person name="Murakami K."/>
            <person name="Yasuda T."/>
            <person name="Iwayanagi T."/>
            <person name="Wagatsuma M."/>
            <person name="Shiratori A."/>
            <person name="Sudo H."/>
            <person name="Hosoiri T."/>
            <person name="Kaku Y."/>
            <person name="Kodaira H."/>
            <person name="Kondo H."/>
            <person name="Sugawara M."/>
            <person name="Takahashi M."/>
            <person name="Kanda K."/>
            <person name="Yokoi T."/>
            <person name="Furuya T."/>
            <person name="Kikkawa E."/>
            <person name="Omura Y."/>
            <person name="Abe K."/>
            <person name="Kamihara K."/>
            <person name="Katsuta N."/>
            <person name="Sato K."/>
            <person name="Tanikawa M."/>
            <person name="Yamazaki M."/>
            <person name="Ninomiya K."/>
            <person name="Ishibashi T."/>
            <person name="Yamashita H."/>
            <person name="Murakawa K."/>
            <person name="Fujimori K."/>
            <person name="Tanai H."/>
            <person name="Kimata M."/>
            <person name="Watanabe M."/>
            <person name="Hiraoka S."/>
            <person name="Chiba Y."/>
            <person name="Ishida S."/>
            <person name="Ono Y."/>
            <person name="Takiguchi S."/>
            <person name="Watanabe S."/>
            <person name="Yosida M."/>
            <person name="Hotuta T."/>
            <person name="Kusano J."/>
            <person name="Kanehori K."/>
            <person name="Takahashi-Fujii A."/>
            <person name="Hara H."/>
            <person name="Tanase T.-O."/>
            <person name="Nomura Y."/>
            <person name="Togiya S."/>
            <person name="Komai F."/>
            <person name="Hara R."/>
            <person name="Takeuchi K."/>
            <person name="Arita M."/>
            <person name="Imose N."/>
            <person name="Musashino K."/>
            <person name="Yuuki H."/>
            <person name="Oshima A."/>
            <person name="Sasaki N."/>
            <person name="Aotsuka S."/>
            <person name="Yoshikawa Y."/>
            <person name="Matsunawa H."/>
            <person name="Ichihara T."/>
            <person name="Shiohata N."/>
            <person name="Sano S."/>
            <person name="Moriya S."/>
            <person name="Momiyama H."/>
            <person name="Satoh N."/>
            <person name="Takami S."/>
            <person name="Terashima Y."/>
            <person name="Suzuki O."/>
            <person name="Nakagawa S."/>
            <person name="Senoh A."/>
            <person name="Mizoguchi H."/>
            <person name="Goto Y."/>
            <person name="Shimizu F."/>
            <person name="Wakebe H."/>
            <person name="Hishigaki H."/>
            <person name="Watanabe T."/>
            <person name="Sugiyama A."/>
            <person name="Takemoto M."/>
            <person name="Kawakami B."/>
            <person name="Yamazaki M."/>
            <person name="Watanabe K."/>
            <person name="Kumagai A."/>
            <person name="Itakura S."/>
            <person name="Fukuzumi Y."/>
            <person name="Fujimori Y."/>
            <person name="Komiyama M."/>
            <person name="Tashiro H."/>
            <person name="Tanigami A."/>
            <person name="Fujiwara T."/>
            <person name="Ono T."/>
            <person name="Yamada K."/>
            <person name="Fujii Y."/>
            <person name="Ozaki K."/>
            <person name="Hirao M."/>
            <person name="Ohmori Y."/>
            <person name="Kawabata A."/>
            <person name="Hikiji T."/>
            <person name="Kobatake N."/>
            <person name="Inagaki H."/>
            <person name="Ikema Y."/>
            <person name="Okamoto S."/>
            <person name="Okitani R."/>
            <person name="Kawakami T."/>
            <person name="Noguchi S."/>
            <person name="Itoh T."/>
            <person name="Shigeta K."/>
            <person name="Senba T."/>
            <person name="Matsumura K."/>
            <person name="Nakajima Y."/>
            <person name="Mizuno T."/>
            <person name="Morinaga M."/>
            <person name="Sasaki M."/>
            <person name="Togashi T."/>
            <person name="Oyama M."/>
            <person name="Hata H."/>
            <person name="Watanabe M."/>
            <person name="Komatsu T."/>
            <person name="Mizushima-Sugano J."/>
            <person name="Satoh T."/>
            <person name="Shirai Y."/>
            <person name="Takahashi Y."/>
            <person name="Nakagawa K."/>
            <person name="Okumura K."/>
            <person name="Nagase T."/>
            <person name="Nomura N."/>
            <person name="Kikuchi H."/>
            <person name="Masuho Y."/>
            <person name="Yamashita R."/>
            <person name="Nakai K."/>
            <person name="Yada T."/>
            <person name="Nakamura Y."/>
            <person name="Ohara O."/>
            <person name="Isogai T."/>
            <person name="Sugano S."/>
        </authorList>
    </citation>
    <scope>NUCLEOTIDE SEQUENCE [LARGE SCALE MRNA] (ISOFORM 1)</scope>
    <source>
        <tissue>Placenta</tissue>
    </source>
</reference>
<reference key="4">
    <citation type="journal article" date="2006" name="Genetics">
        <title>Rapid evolution of major histocompatibility complex class I genes in primates generates new disease alleles in humans via hitchhiking diversity.</title>
        <authorList>
            <person name="Shiina T."/>
            <person name="Ota M."/>
            <person name="Shimizu S."/>
            <person name="Katsuyama Y."/>
            <person name="Hashimoto N."/>
            <person name="Takasu M."/>
            <person name="Anzai T."/>
            <person name="Kulski J.K."/>
            <person name="Kikkawa E."/>
            <person name="Naruse T."/>
            <person name="Kimura N."/>
            <person name="Yanagiya K."/>
            <person name="Watanabe A."/>
            <person name="Hosomichi K."/>
            <person name="Kohara S."/>
            <person name="Iwamoto C."/>
            <person name="Umehara Y."/>
            <person name="Meyer A."/>
            <person name="Wanner V."/>
            <person name="Sano K."/>
            <person name="Macquin C."/>
            <person name="Ikeo K."/>
            <person name="Tokunaga K."/>
            <person name="Gojobori T."/>
            <person name="Inoko H."/>
            <person name="Bahram S."/>
        </authorList>
    </citation>
    <scope>NUCLEOTIDE SEQUENCE [LARGE SCALE GENOMIC DNA]</scope>
    <source>
        <tissue>Peripheral blood leukocyte</tissue>
    </source>
</reference>
<reference key="5">
    <citation type="journal article" date="2003" name="Nature">
        <title>The DNA sequence and analysis of human chromosome 6.</title>
        <authorList>
            <person name="Mungall A.J."/>
            <person name="Palmer S.A."/>
            <person name="Sims S.K."/>
            <person name="Edwards C.A."/>
            <person name="Ashurst J.L."/>
            <person name="Wilming L."/>
            <person name="Jones M.C."/>
            <person name="Horton R."/>
            <person name="Hunt S.E."/>
            <person name="Scott C.E."/>
            <person name="Gilbert J.G.R."/>
            <person name="Clamp M.E."/>
            <person name="Bethel G."/>
            <person name="Milne S."/>
            <person name="Ainscough R."/>
            <person name="Almeida J.P."/>
            <person name="Ambrose K.D."/>
            <person name="Andrews T.D."/>
            <person name="Ashwell R.I.S."/>
            <person name="Babbage A.K."/>
            <person name="Bagguley C.L."/>
            <person name="Bailey J."/>
            <person name="Banerjee R."/>
            <person name="Barker D.J."/>
            <person name="Barlow K.F."/>
            <person name="Bates K."/>
            <person name="Beare D.M."/>
            <person name="Beasley H."/>
            <person name="Beasley O."/>
            <person name="Bird C.P."/>
            <person name="Blakey S.E."/>
            <person name="Bray-Allen S."/>
            <person name="Brook J."/>
            <person name="Brown A.J."/>
            <person name="Brown J.Y."/>
            <person name="Burford D.C."/>
            <person name="Burrill W."/>
            <person name="Burton J."/>
            <person name="Carder C."/>
            <person name="Carter N.P."/>
            <person name="Chapman J.C."/>
            <person name="Clark S.Y."/>
            <person name="Clark G."/>
            <person name="Clee C.M."/>
            <person name="Clegg S."/>
            <person name="Cobley V."/>
            <person name="Collier R.E."/>
            <person name="Collins J.E."/>
            <person name="Colman L.K."/>
            <person name="Corby N.R."/>
            <person name="Coville G.J."/>
            <person name="Culley K.M."/>
            <person name="Dhami P."/>
            <person name="Davies J."/>
            <person name="Dunn M."/>
            <person name="Earthrowl M.E."/>
            <person name="Ellington A.E."/>
            <person name="Evans K.A."/>
            <person name="Faulkner L."/>
            <person name="Francis M.D."/>
            <person name="Frankish A."/>
            <person name="Frankland J."/>
            <person name="French L."/>
            <person name="Garner P."/>
            <person name="Garnett J."/>
            <person name="Ghori M.J."/>
            <person name="Gilby L.M."/>
            <person name="Gillson C.J."/>
            <person name="Glithero R.J."/>
            <person name="Grafham D.V."/>
            <person name="Grant M."/>
            <person name="Gribble S."/>
            <person name="Griffiths C."/>
            <person name="Griffiths M.N.D."/>
            <person name="Hall R."/>
            <person name="Halls K.S."/>
            <person name="Hammond S."/>
            <person name="Harley J.L."/>
            <person name="Hart E.A."/>
            <person name="Heath P.D."/>
            <person name="Heathcott R."/>
            <person name="Holmes S.J."/>
            <person name="Howden P.J."/>
            <person name="Howe K.L."/>
            <person name="Howell G.R."/>
            <person name="Huckle E."/>
            <person name="Humphray S.J."/>
            <person name="Humphries M.D."/>
            <person name="Hunt A.R."/>
            <person name="Johnson C.M."/>
            <person name="Joy A.A."/>
            <person name="Kay M."/>
            <person name="Keenan S.J."/>
            <person name="Kimberley A.M."/>
            <person name="King A."/>
            <person name="Laird G.K."/>
            <person name="Langford C."/>
            <person name="Lawlor S."/>
            <person name="Leongamornlert D.A."/>
            <person name="Leversha M."/>
            <person name="Lloyd C.R."/>
            <person name="Lloyd D.M."/>
            <person name="Loveland J.E."/>
            <person name="Lovell J."/>
            <person name="Martin S."/>
            <person name="Mashreghi-Mohammadi M."/>
            <person name="Maslen G.L."/>
            <person name="Matthews L."/>
            <person name="McCann O.T."/>
            <person name="McLaren S.J."/>
            <person name="McLay K."/>
            <person name="McMurray A."/>
            <person name="Moore M.J.F."/>
            <person name="Mullikin J.C."/>
            <person name="Niblett D."/>
            <person name="Nickerson T."/>
            <person name="Novik K.L."/>
            <person name="Oliver K."/>
            <person name="Overton-Larty E.K."/>
            <person name="Parker A."/>
            <person name="Patel R."/>
            <person name="Pearce A.V."/>
            <person name="Peck A.I."/>
            <person name="Phillimore B.J.C.T."/>
            <person name="Phillips S."/>
            <person name="Plumb R.W."/>
            <person name="Porter K.M."/>
            <person name="Ramsey Y."/>
            <person name="Ranby S.A."/>
            <person name="Rice C.M."/>
            <person name="Ross M.T."/>
            <person name="Searle S.M."/>
            <person name="Sehra H.K."/>
            <person name="Sheridan E."/>
            <person name="Skuce C.D."/>
            <person name="Smith S."/>
            <person name="Smith M."/>
            <person name="Spraggon L."/>
            <person name="Squares S.L."/>
            <person name="Steward C.A."/>
            <person name="Sycamore N."/>
            <person name="Tamlyn-Hall G."/>
            <person name="Tester J."/>
            <person name="Theaker A.J."/>
            <person name="Thomas D.W."/>
            <person name="Thorpe A."/>
            <person name="Tracey A."/>
            <person name="Tromans A."/>
            <person name="Tubby B."/>
            <person name="Wall M."/>
            <person name="Wallis J.M."/>
            <person name="West A.P."/>
            <person name="White S.S."/>
            <person name="Whitehead S.L."/>
            <person name="Whittaker H."/>
            <person name="Wild A."/>
            <person name="Willey D.J."/>
            <person name="Wilmer T.E."/>
            <person name="Wood J.M."/>
            <person name="Wray P.W."/>
            <person name="Wyatt J.C."/>
            <person name="Young L."/>
            <person name="Younger R.M."/>
            <person name="Bentley D.R."/>
            <person name="Coulson A."/>
            <person name="Durbin R.M."/>
            <person name="Hubbard T."/>
            <person name="Sulston J.E."/>
            <person name="Dunham I."/>
            <person name="Rogers J."/>
            <person name="Beck S."/>
        </authorList>
    </citation>
    <scope>NUCLEOTIDE SEQUENCE [LARGE SCALE GENOMIC DNA]</scope>
</reference>
<reference key="6">
    <citation type="submission" date="2005-07" db="EMBL/GenBank/DDBJ databases">
        <authorList>
            <person name="Mural R.J."/>
            <person name="Istrail S."/>
            <person name="Sutton G.G."/>
            <person name="Florea L."/>
            <person name="Halpern A.L."/>
            <person name="Mobarry C.M."/>
            <person name="Lippert R."/>
            <person name="Walenz B."/>
            <person name="Shatkay H."/>
            <person name="Dew I."/>
            <person name="Miller J.R."/>
            <person name="Flanigan M.J."/>
            <person name="Edwards N.J."/>
            <person name="Bolanos R."/>
            <person name="Fasulo D."/>
            <person name="Halldorsson B.V."/>
            <person name="Hannenhalli S."/>
            <person name="Turner R."/>
            <person name="Yooseph S."/>
            <person name="Lu F."/>
            <person name="Nusskern D.R."/>
            <person name="Shue B.C."/>
            <person name="Zheng X.H."/>
            <person name="Zhong F."/>
            <person name="Delcher A.L."/>
            <person name="Huson D.H."/>
            <person name="Kravitz S.A."/>
            <person name="Mouchard L."/>
            <person name="Reinert K."/>
            <person name="Remington K.A."/>
            <person name="Clark A.G."/>
            <person name="Waterman M.S."/>
            <person name="Eichler E.E."/>
            <person name="Adams M.D."/>
            <person name="Hunkapiller M.W."/>
            <person name="Myers E.W."/>
            <person name="Venter J.C."/>
        </authorList>
    </citation>
    <scope>NUCLEOTIDE SEQUENCE [LARGE SCALE GENOMIC DNA]</scope>
</reference>
<reference key="7">
    <citation type="journal article" date="2004" name="Genome Res.">
        <title>The status, quality, and expansion of the NIH full-length cDNA project: the Mammalian Gene Collection (MGC).</title>
        <authorList>
            <consortium name="The MGC Project Team"/>
        </authorList>
    </citation>
    <scope>NUCLEOTIDE SEQUENCE [LARGE SCALE MRNA] (ISOFORM 1)</scope>
    <source>
        <tissue>Brain</tissue>
        <tissue>Ovary</tissue>
        <tissue>Testis</tissue>
    </source>
</reference>
<reference key="8">
    <citation type="journal article" date="1999" name="J. Cell Biol.">
        <title>A visual screen of a GFP-fusion library identifies a new type of nuclear envelope membrane protein.</title>
        <authorList>
            <person name="Rolls M.M."/>
            <person name="Stein P.A."/>
            <person name="Taylor S.S."/>
            <person name="Ha E."/>
            <person name="McKeon F."/>
            <person name="Rapoport T.A."/>
        </authorList>
    </citation>
    <scope>NUCLEOTIDE SEQUENCE [MRNA] OF 2-262 (ISOFORM 1)</scope>
    <scope>SUBCELLULAR LOCATION</scope>
</reference>
<reference key="9">
    <citation type="journal article" date="2005" name="J. Biol. Chem.">
        <title>Analysis of the localization and topology of nurim, a polytopic protein tightly associated with the inner nuclear membrane.</title>
        <authorList>
            <person name="Hofemeister H."/>
            <person name="O'Hare P."/>
        </authorList>
    </citation>
    <scope>SUBCELLULAR LOCATION</scope>
    <scope>MEMBRANE TOPOLOGY</scope>
</reference>